<organism>
    <name type="scientific">Salmonella paratyphi C (strain RKS4594)</name>
    <dbReference type="NCBI Taxonomy" id="476213"/>
    <lineage>
        <taxon>Bacteria</taxon>
        <taxon>Pseudomonadati</taxon>
        <taxon>Pseudomonadota</taxon>
        <taxon>Gammaproteobacteria</taxon>
        <taxon>Enterobacterales</taxon>
        <taxon>Enterobacteriaceae</taxon>
        <taxon>Salmonella</taxon>
    </lineage>
</organism>
<comment type="function">
    <text evidence="1">Binds to the 23S rRNA.</text>
</comment>
<comment type="subunit">
    <text evidence="1">Part of the 50S ribosomal subunit.</text>
</comment>
<comment type="similarity">
    <text evidence="1">Belongs to the universal ribosomal protein uL15 family.</text>
</comment>
<keyword id="KW-0687">Ribonucleoprotein</keyword>
<keyword id="KW-0689">Ribosomal protein</keyword>
<keyword id="KW-0694">RNA-binding</keyword>
<keyword id="KW-0699">rRNA-binding</keyword>
<protein>
    <recommendedName>
        <fullName evidence="1">Large ribosomal subunit protein uL15</fullName>
    </recommendedName>
    <alternativeName>
        <fullName evidence="3">50S ribosomal protein L15</fullName>
    </alternativeName>
</protein>
<name>RL15_SALPC</name>
<proteinExistence type="inferred from homology"/>
<evidence type="ECO:0000255" key="1">
    <source>
        <dbReference type="HAMAP-Rule" id="MF_01341"/>
    </source>
</evidence>
<evidence type="ECO:0000256" key="2">
    <source>
        <dbReference type="SAM" id="MobiDB-lite"/>
    </source>
</evidence>
<evidence type="ECO:0000305" key="3"/>
<feature type="chain" id="PRO_1000166312" description="Large ribosomal subunit protein uL15">
    <location>
        <begin position="1"/>
        <end position="144"/>
    </location>
</feature>
<feature type="region of interest" description="Disordered" evidence="2">
    <location>
        <begin position="1"/>
        <end position="54"/>
    </location>
</feature>
<feature type="compositionally biased region" description="Gly residues" evidence="2">
    <location>
        <begin position="21"/>
        <end position="31"/>
    </location>
</feature>
<gene>
    <name evidence="1" type="primary">rplO</name>
    <name type="ordered locus">SPC_3490</name>
</gene>
<reference key="1">
    <citation type="journal article" date="2009" name="PLoS ONE">
        <title>Salmonella paratyphi C: genetic divergence from Salmonella choleraesuis and pathogenic convergence with Salmonella typhi.</title>
        <authorList>
            <person name="Liu W.-Q."/>
            <person name="Feng Y."/>
            <person name="Wang Y."/>
            <person name="Zou Q.-H."/>
            <person name="Chen F."/>
            <person name="Guo J.-T."/>
            <person name="Peng Y.-H."/>
            <person name="Jin Y."/>
            <person name="Li Y.-G."/>
            <person name="Hu S.-N."/>
            <person name="Johnston R.N."/>
            <person name="Liu G.-R."/>
            <person name="Liu S.-L."/>
        </authorList>
    </citation>
    <scope>NUCLEOTIDE SEQUENCE [LARGE SCALE GENOMIC DNA]</scope>
    <source>
        <strain>RKS4594</strain>
    </source>
</reference>
<sequence length="144" mass="14966">MRLNTLSPAEGSKKAGKRLGRGIGSGLGKTGGRGHKGQKSRSGGGVRRGFEGGQMPLYRRLPKFGFTSRKAAITAEVRLSDLAKVEGGVVDLNTLKAANIIGIQIEFAKVILAGEVTTPVTVRGLRVTKGARAAIEAAGGKIEE</sequence>
<dbReference type="EMBL" id="CP000857">
    <property type="protein sequence ID" value="ACN47574.1"/>
    <property type="molecule type" value="Genomic_DNA"/>
</dbReference>
<dbReference type="RefSeq" id="WP_001238917.1">
    <property type="nucleotide sequence ID" value="NC_012125.1"/>
</dbReference>
<dbReference type="SMR" id="C0PZW4"/>
<dbReference type="GeneID" id="93778686"/>
<dbReference type="KEGG" id="sei:SPC_3490"/>
<dbReference type="HOGENOM" id="CLU_055188_4_2_6"/>
<dbReference type="Proteomes" id="UP000001599">
    <property type="component" value="Chromosome"/>
</dbReference>
<dbReference type="GO" id="GO:0022625">
    <property type="term" value="C:cytosolic large ribosomal subunit"/>
    <property type="evidence" value="ECO:0007669"/>
    <property type="project" value="TreeGrafter"/>
</dbReference>
<dbReference type="GO" id="GO:0019843">
    <property type="term" value="F:rRNA binding"/>
    <property type="evidence" value="ECO:0007669"/>
    <property type="project" value="UniProtKB-UniRule"/>
</dbReference>
<dbReference type="GO" id="GO:0003735">
    <property type="term" value="F:structural constituent of ribosome"/>
    <property type="evidence" value="ECO:0007669"/>
    <property type="project" value="InterPro"/>
</dbReference>
<dbReference type="GO" id="GO:0006412">
    <property type="term" value="P:translation"/>
    <property type="evidence" value="ECO:0007669"/>
    <property type="project" value="UniProtKB-UniRule"/>
</dbReference>
<dbReference type="FunFam" id="3.100.10.10:FF:000003">
    <property type="entry name" value="50S ribosomal protein L15"/>
    <property type="match status" value="1"/>
</dbReference>
<dbReference type="Gene3D" id="3.100.10.10">
    <property type="match status" value="1"/>
</dbReference>
<dbReference type="HAMAP" id="MF_01341">
    <property type="entry name" value="Ribosomal_uL15"/>
    <property type="match status" value="1"/>
</dbReference>
<dbReference type="InterPro" id="IPR030878">
    <property type="entry name" value="Ribosomal_uL15"/>
</dbReference>
<dbReference type="InterPro" id="IPR021131">
    <property type="entry name" value="Ribosomal_uL15/eL18"/>
</dbReference>
<dbReference type="InterPro" id="IPR036227">
    <property type="entry name" value="Ribosomal_uL15/eL18_sf"/>
</dbReference>
<dbReference type="InterPro" id="IPR005749">
    <property type="entry name" value="Ribosomal_uL15_bac-type"/>
</dbReference>
<dbReference type="InterPro" id="IPR001196">
    <property type="entry name" value="Ribosomal_uL15_CS"/>
</dbReference>
<dbReference type="NCBIfam" id="TIGR01071">
    <property type="entry name" value="rplO_bact"/>
    <property type="match status" value="1"/>
</dbReference>
<dbReference type="PANTHER" id="PTHR12934">
    <property type="entry name" value="50S RIBOSOMAL PROTEIN L15"/>
    <property type="match status" value="1"/>
</dbReference>
<dbReference type="PANTHER" id="PTHR12934:SF11">
    <property type="entry name" value="LARGE RIBOSOMAL SUBUNIT PROTEIN UL15M"/>
    <property type="match status" value="1"/>
</dbReference>
<dbReference type="Pfam" id="PF00828">
    <property type="entry name" value="Ribosomal_L27A"/>
    <property type="match status" value="1"/>
</dbReference>
<dbReference type="SUPFAM" id="SSF52080">
    <property type="entry name" value="Ribosomal proteins L15p and L18e"/>
    <property type="match status" value="1"/>
</dbReference>
<dbReference type="PROSITE" id="PS00475">
    <property type="entry name" value="RIBOSOMAL_L15"/>
    <property type="match status" value="1"/>
</dbReference>
<accession>C0PZW4</accession>